<protein>
    <recommendedName>
        <fullName evidence="5">Membrane-associated protein Vipp1</fullName>
    </recommendedName>
    <alternativeName>
        <fullName>Vesicle-inducing protein in plastids 1</fullName>
        <shortName evidence="5">Vipp1</shortName>
    </alternativeName>
</protein>
<keyword id="KW-0002">3D-structure</keyword>
<keyword id="KW-0997">Cell inner membrane</keyword>
<keyword id="KW-1003">Cell membrane</keyword>
<keyword id="KW-0175">Coiled coil</keyword>
<keyword id="KW-0903">Direct protein sequencing</keyword>
<keyword id="KW-0472">Membrane</keyword>
<keyword id="KW-1185">Reference proteome</keyword>
<evidence type="ECO:0000255" key="1"/>
<evidence type="ECO:0000256" key="2">
    <source>
        <dbReference type="SAM" id="MobiDB-lite"/>
    </source>
</evidence>
<evidence type="ECO:0000269" key="3">
    <source>
    </source>
</evidence>
<evidence type="ECO:0000269" key="4">
    <source>
    </source>
</evidence>
<evidence type="ECO:0000303" key="5">
    <source>
    </source>
</evidence>
<evidence type="ECO:0000305" key="6"/>
<evidence type="ECO:0007829" key="7">
    <source>
        <dbReference type="PDB" id="9EOO"/>
    </source>
</evidence>
<comment type="function">
    <text evidence="3">Required for thylakoid formation (PubMed:11274448).</text>
</comment>
<comment type="subcellular location">
    <subcellularLocation>
        <location evidence="3">Cell inner membrane</location>
        <topology evidence="3">Peripheral membrane protein</topology>
    </subcellularLocation>
    <text evidence="3">Protein is not associated with thylakoids (PubMed:11274448).</text>
</comment>
<comment type="disruption phenotype">
    <text evidence="3">Essential, it cannot be completely disrupted (PubMed:11274448). Cells with very low levels of protein have no ordered thylakoids, are barely green and are non-photosynthetic (PubMed:11274448).</text>
</comment>
<comment type="similarity">
    <text evidence="6">Belongs to the PspA/Vipp/IM30 family.</text>
</comment>
<feature type="initiator methionine" description="Removed" evidence="4">
    <location>
        <position position="1"/>
    </location>
</feature>
<feature type="chain" id="PRO_0000166296" description="Membrane-associated protein Vipp1">
    <location>
        <begin position="2"/>
        <end position="267"/>
    </location>
</feature>
<feature type="region of interest" description="Disordered" evidence="2">
    <location>
        <begin position="224"/>
        <end position="252"/>
    </location>
</feature>
<feature type="coiled-coil region" evidence="1">
    <location>
        <begin position="26"/>
        <end position="156"/>
    </location>
</feature>
<feature type="helix" evidence="7">
    <location>
        <begin position="3"/>
        <end position="20"/>
    </location>
</feature>
<feature type="helix" evidence="7">
    <location>
        <begin position="25"/>
        <end position="80"/>
    </location>
</feature>
<feature type="helix" evidence="7">
    <location>
        <begin position="84"/>
        <end position="162"/>
    </location>
</feature>
<feature type="helix" evidence="7">
    <location>
        <begin position="164"/>
        <end position="189"/>
    </location>
</feature>
<feature type="helix" evidence="7">
    <location>
        <begin position="193"/>
        <end position="197"/>
    </location>
</feature>
<feature type="turn" evidence="7">
    <location>
        <begin position="201"/>
        <end position="204"/>
    </location>
</feature>
<feature type="helix" evidence="7">
    <location>
        <begin position="207"/>
        <end position="215"/>
    </location>
</feature>
<reference key="1">
    <citation type="journal article" date="1995" name="DNA Res.">
        <title>Sequence analysis of the genome of the unicellular cyanobacterium Synechocystis sp. strain PCC6803. I. Sequence features in the 1 Mb region from map positions 64% to 92% of the genome.</title>
        <authorList>
            <person name="Kaneko T."/>
            <person name="Tanaka A."/>
            <person name="Sato S."/>
            <person name="Kotani H."/>
            <person name="Sazuka T."/>
            <person name="Miyajima N."/>
            <person name="Sugiura M."/>
            <person name="Tabata S."/>
        </authorList>
    </citation>
    <scope>NUCLEOTIDE SEQUENCE [LARGE SCALE GENOMIC DNA]</scope>
    <source>
        <strain>ATCC 27184 / PCC 6803 / N-1</strain>
    </source>
</reference>
<reference key="2">
    <citation type="journal article" date="1996" name="DNA Res.">
        <title>Sequence analysis of the genome of the unicellular cyanobacterium Synechocystis sp. strain PCC6803. II. Sequence determination of the entire genome and assignment of potential protein-coding regions.</title>
        <authorList>
            <person name="Kaneko T."/>
            <person name="Sato S."/>
            <person name="Kotani H."/>
            <person name="Tanaka A."/>
            <person name="Asamizu E."/>
            <person name="Nakamura Y."/>
            <person name="Miyajima N."/>
            <person name="Hirosawa M."/>
            <person name="Sugiura M."/>
            <person name="Sasamoto S."/>
            <person name="Kimura T."/>
            <person name="Hosouchi T."/>
            <person name="Matsuno A."/>
            <person name="Muraki A."/>
            <person name="Nakazaki N."/>
            <person name="Naruo K."/>
            <person name="Okumura S."/>
            <person name="Shimpo S."/>
            <person name="Takeuchi C."/>
            <person name="Wada T."/>
            <person name="Watanabe A."/>
            <person name="Yamada M."/>
            <person name="Yasuda M."/>
            <person name="Tabata S."/>
        </authorList>
    </citation>
    <scope>NUCLEOTIDE SEQUENCE [LARGE SCALE GENOMIC DNA]</scope>
    <source>
        <strain>ATCC 27184 / PCC 6803 / Kazusa</strain>
    </source>
</reference>
<reference key="3">
    <citation type="journal article" date="1997" name="Electrophoresis">
        <title>Towards a proteome project of cyanobacterium Synechocystis sp. strain PCC6803: linking 130 protein spots with their respective genes.</title>
        <authorList>
            <person name="Sazuka T."/>
            <person name="Ohara O."/>
        </authorList>
    </citation>
    <scope>PROTEIN SEQUENCE OF 2-21</scope>
    <source>
        <strain>ATCC 27184 / PCC 6803 / Kazusa</strain>
    </source>
</reference>
<reference key="4">
    <citation type="journal article" date="2001" name="Proc. Natl. Acad. Sci. U.S.A.">
        <title>Vipp1 deletion mutant of Synechocystis: a connection between bacterial phage shock and thylakoid biogenesis?</title>
        <authorList>
            <person name="Westphal S."/>
            <person name="Heins L."/>
            <person name="Soll J."/>
            <person name="Vothknecht U.C."/>
        </authorList>
    </citation>
    <scope>FUNCTION</scope>
    <scope>SUBCELLULAR LOCATION</scope>
    <scope>DISRUPTION PHENOTYPE</scope>
    <source>
        <strain>ATCC 27184 / PCC 6803 / Kazusa</strain>
    </source>
</reference>
<sequence>MGLFDRLGRVVRANLNDLVSKAEDPEKVLEQAVIDMQEDLVQLRQAVARTIAEEKRTEQRLNQDTQEAKKWEDRAKLALTNGEENLAREALARKKSLTDTAAAYQTQLAQQRTMSENLRRNLAALEAKISEAKTKKNMLQARAKAAKANAELQQTLGGLGTSSATSAFERMENKVLDMEATSQAAGELAGFGIENQFAQLEASSGVEDELAALKASMAGGALPGTSAATPQLEAAPVDSSVPANNASQDDAVIDQELDDLRRRLNNL</sequence>
<organism>
    <name type="scientific">Synechocystis sp. (strain ATCC 27184 / PCC 6803 / Kazusa)</name>
    <dbReference type="NCBI Taxonomy" id="1111708"/>
    <lineage>
        <taxon>Bacteria</taxon>
        <taxon>Bacillati</taxon>
        <taxon>Cyanobacteriota</taxon>
        <taxon>Cyanophyceae</taxon>
        <taxon>Synechococcales</taxon>
        <taxon>Merismopediaceae</taxon>
        <taxon>Synechocystis</taxon>
    </lineage>
</organism>
<name>VIPP1_SYNY3</name>
<dbReference type="EMBL" id="BA000022">
    <property type="protein sequence ID" value="BAA10345.1"/>
    <property type="molecule type" value="Genomic_DNA"/>
</dbReference>
<dbReference type="PIR" id="S76499">
    <property type="entry name" value="S76499"/>
</dbReference>
<dbReference type="PDB" id="7O3W">
    <property type="method" value="EM"/>
    <property type="resolution" value="4.90 A"/>
    <property type="chains" value="A/B/C/D/E/F=3-267"/>
</dbReference>
<dbReference type="PDB" id="7O3X">
    <property type="method" value="EM"/>
    <property type="resolution" value="3.90 A"/>
    <property type="chains" value="A/B/C/D/E/F=3-267"/>
</dbReference>
<dbReference type="PDB" id="7O3Y">
    <property type="method" value="EM"/>
    <property type="resolution" value="3.80 A"/>
    <property type="chains" value="A/B/C/D/E/F=3-267"/>
</dbReference>
<dbReference type="PDB" id="7O3Z">
    <property type="method" value="EM"/>
    <property type="resolution" value="5.00 A"/>
    <property type="chains" value="A/B/C/D/E/F=3-267"/>
</dbReference>
<dbReference type="PDB" id="7O40">
    <property type="method" value="EM"/>
    <property type="resolution" value="4.30 A"/>
    <property type="chains" value="A/B/C/D/E/F=3-267"/>
</dbReference>
<dbReference type="PDB" id="8QFV">
    <property type="method" value="EM"/>
    <property type="resolution" value="5.10 A"/>
    <property type="chains" value="0=1-267"/>
</dbReference>
<dbReference type="PDB" id="8QHV">
    <property type="method" value="EM"/>
    <property type="resolution" value="7.00 A"/>
    <property type="chains" value="0=3-216"/>
</dbReference>
<dbReference type="PDB" id="8QHW">
    <property type="method" value="EM"/>
    <property type="resolution" value="7.10 A"/>
    <property type="chains" value="E=3-216"/>
</dbReference>
<dbReference type="PDB" id="8QHX">
    <property type="method" value="EM"/>
    <property type="resolution" value="6.90 A"/>
    <property type="chains" value="D=24-215"/>
</dbReference>
<dbReference type="PDB" id="8QHY">
    <property type="method" value="EM"/>
    <property type="resolution" value="7.00 A"/>
    <property type="chains" value="D=24-215"/>
</dbReference>
<dbReference type="PDB" id="8QHZ">
    <property type="method" value="EM"/>
    <property type="resolution" value="6.30 A"/>
    <property type="chains" value="D=24-215"/>
</dbReference>
<dbReference type="PDB" id="8QI0">
    <property type="method" value="EM"/>
    <property type="resolution" value="6.70 A"/>
    <property type="chains" value="D=24-215"/>
</dbReference>
<dbReference type="PDB" id="8QI1">
    <property type="method" value="EM"/>
    <property type="resolution" value="6.60 A"/>
    <property type="chains" value="D=24-215"/>
</dbReference>
<dbReference type="PDB" id="8QI2">
    <property type="method" value="EM"/>
    <property type="resolution" value="6.70 A"/>
    <property type="chains" value="D=24-215"/>
</dbReference>
<dbReference type="PDB" id="8QI3">
    <property type="method" value="EM"/>
    <property type="resolution" value="6.60 A"/>
    <property type="chains" value="D=24-215"/>
</dbReference>
<dbReference type="PDB" id="8QI4">
    <property type="method" value="EM"/>
    <property type="resolution" value="7.00 A"/>
    <property type="chains" value="D=24-215"/>
</dbReference>
<dbReference type="PDB" id="8QI5">
    <property type="method" value="EM"/>
    <property type="resolution" value="6.70 A"/>
    <property type="chains" value="D=24-215"/>
</dbReference>
<dbReference type="PDB" id="8QI6">
    <property type="method" value="EM"/>
    <property type="resolution" value="7.80 A"/>
    <property type="chains" value="D=24-215"/>
</dbReference>
<dbReference type="PDB" id="9EOM">
    <property type="method" value="EM"/>
    <property type="resolution" value="5.50 A"/>
    <property type="chains" value="A=1-267"/>
</dbReference>
<dbReference type="PDB" id="9EON">
    <property type="method" value="EM"/>
    <property type="resolution" value="6.40 A"/>
    <property type="chains" value="A=1-267"/>
</dbReference>
<dbReference type="PDB" id="9EOO">
    <property type="method" value="EM"/>
    <property type="resolution" value="3.00 A"/>
    <property type="chains" value="A=1-267"/>
</dbReference>
<dbReference type="PDB" id="9EOP">
    <property type="method" value="EM"/>
    <property type="resolution" value="3.00 A"/>
    <property type="chains" value="A=1-267"/>
</dbReference>
<dbReference type="PDBsum" id="7O3W"/>
<dbReference type="PDBsum" id="7O3X"/>
<dbReference type="PDBsum" id="7O3Y"/>
<dbReference type="PDBsum" id="7O3Z"/>
<dbReference type="PDBsum" id="7O40"/>
<dbReference type="PDBsum" id="8QFV"/>
<dbReference type="PDBsum" id="8QHV"/>
<dbReference type="PDBsum" id="8QHW"/>
<dbReference type="PDBsum" id="8QHX"/>
<dbReference type="PDBsum" id="8QHY"/>
<dbReference type="PDBsum" id="8QHZ"/>
<dbReference type="PDBsum" id="8QI0"/>
<dbReference type="PDBsum" id="8QI1"/>
<dbReference type="PDBsum" id="8QI2"/>
<dbReference type="PDBsum" id="8QI3"/>
<dbReference type="PDBsum" id="8QI4"/>
<dbReference type="PDBsum" id="8QI5"/>
<dbReference type="PDBsum" id="8QI6"/>
<dbReference type="PDBsum" id="9EOM"/>
<dbReference type="PDBsum" id="9EON"/>
<dbReference type="PDBsum" id="9EOO"/>
<dbReference type="PDBsum" id="9EOP"/>
<dbReference type="EMDB" id="EMD-12710"/>
<dbReference type="EMDB" id="EMD-12711"/>
<dbReference type="EMDB" id="EMD-12712"/>
<dbReference type="EMDB" id="EMD-12713"/>
<dbReference type="EMDB" id="EMD-12714"/>
<dbReference type="EMDB" id="EMD-18384"/>
<dbReference type="EMDB" id="EMD-18420"/>
<dbReference type="EMDB" id="EMD-18421"/>
<dbReference type="EMDB" id="EMD-18422"/>
<dbReference type="EMDB" id="EMD-18423"/>
<dbReference type="EMDB" id="EMD-18424"/>
<dbReference type="EMDB" id="EMD-18425"/>
<dbReference type="EMDB" id="EMD-18426"/>
<dbReference type="EMDB" id="EMD-18427"/>
<dbReference type="EMDB" id="EMD-18428"/>
<dbReference type="EMDB" id="EMD-18429"/>
<dbReference type="EMDB" id="EMD-18430"/>
<dbReference type="EMDB" id="EMD-18431"/>
<dbReference type="EMDB" id="EMD-18432"/>
<dbReference type="EMDB" id="EMD-18433"/>
<dbReference type="EMDB" id="EMD-18434"/>
<dbReference type="EMDB" id="EMD-18435"/>
<dbReference type="EMDB" id="EMD-18620"/>
<dbReference type="EMDB" id="EMD-19863"/>
<dbReference type="EMDB" id="EMD-19864"/>
<dbReference type="EMDB" id="EMD-19865"/>
<dbReference type="EMDB" id="EMD-19866"/>
<dbReference type="EMDB" id="EMD-19899"/>
<dbReference type="EMDB" id="EMD-19900"/>
<dbReference type="EMDB" id="EMD-19901"/>
<dbReference type="EMDB" id="EMD-19902"/>
<dbReference type="EMDB" id="EMD-19903"/>
<dbReference type="EMDB" id="EMD-19904"/>
<dbReference type="SMR" id="Q55707"/>
<dbReference type="FunCoup" id="Q55707">
    <property type="interactions" value="29"/>
</dbReference>
<dbReference type="STRING" id="1148.gene:10499846"/>
<dbReference type="PaxDb" id="1148-1001614"/>
<dbReference type="EnsemblBacteria" id="BAA10345">
    <property type="protein sequence ID" value="BAA10345"/>
    <property type="gene ID" value="BAA10345"/>
</dbReference>
<dbReference type="KEGG" id="syn:sll0617"/>
<dbReference type="eggNOG" id="COG1842">
    <property type="taxonomic scope" value="Bacteria"/>
</dbReference>
<dbReference type="InParanoid" id="Q55707"/>
<dbReference type="PhylomeDB" id="Q55707"/>
<dbReference type="Proteomes" id="UP000001425">
    <property type="component" value="Chromosome"/>
</dbReference>
<dbReference type="GO" id="GO:0005886">
    <property type="term" value="C:plasma membrane"/>
    <property type="evidence" value="ECO:0007669"/>
    <property type="project" value="UniProtKB-SubCell"/>
</dbReference>
<dbReference type="InterPro" id="IPR007157">
    <property type="entry name" value="PspA_VIPP1"/>
</dbReference>
<dbReference type="PANTHER" id="PTHR31088">
    <property type="entry name" value="MEMBRANE-ASSOCIATED PROTEIN VIPP1, CHLOROPLASTIC"/>
    <property type="match status" value="1"/>
</dbReference>
<dbReference type="PANTHER" id="PTHR31088:SF6">
    <property type="entry name" value="PHAGE SHOCK PROTEIN A"/>
    <property type="match status" value="1"/>
</dbReference>
<dbReference type="Pfam" id="PF04012">
    <property type="entry name" value="PspA_IM30"/>
    <property type="match status" value="1"/>
</dbReference>
<proteinExistence type="evidence at protein level"/>
<gene>
    <name evidence="5" type="primary">vipp1</name>
    <name type="ordered locus">sll0617</name>
</gene>
<accession>Q55707</accession>